<organism>
    <name type="scientific">Brucella suis biovar 1 (strain 1330)</name>
    <dbReference type="NCBI Taxonomy" id="204722"/>
    <lineage>
        <taxon>Bacteria</taxon>
        <taxon>Pseudomonadati</taxon>
        <taxon>Pseudomonadota</taxon>
        <taxon>Alphaproteobacteria</taxon>
        <taxon>Hyphomicrobiales</taxon>
        <taxon>Brucellaceae</taxon>
        <taxon>Brucella/Ochrobactrum group</taxon>
        <taxon>Brucella</taxon>
    </lineage>
</organism>
<accession>Q8G2J0</accession>
<accession>G0K685</accession>
<name>PANC_BRUSU</name>
<evidence type="ECO:0000255" key="1">
    <source>
        <dbReference type="HAMAP-Rule" id="MF_00158"/>
    </source>
</evidence>
<comment type="function">
    <text evidence="1">Catalyzes the condensation of pantoate with beta-alanine in an ATP-dependent reaction via a pantoyl-adenylate intermediate.</text>
</comment>
<comment type="catalytic activity">
    <reaction evidence="1">
        <text>(R)-pantoate + beta-alanine + ATP = (R)-pantothenate + AMP + diphosphate + H(+)</text>
        <dbReference type="Rhea" id="RHEA:10912"/>
        <dbReference type="ChEBI" id="CHEBI:15378"/>
        <dbReference type="ChEBI" id="CHEBI:15980"/>
        <dbReference type="ChEBI" id="CHEBI:29032"/>
        <dbReference type="ChEBI" id="CHEBI:30616"/>
        <dbReference type="ChEBI" id="CHEBI:33019"/>
        <dbReference type="ChEBI" id="CHEBI:57966"/>
        <dbReference type="ChEBI" id="CHEBI:456215"/>
        <dbReference type="EC" id="6.3.2.1"/>
    </reaction>
</comment>
<comment type="pathway">
    <text evidence="1">Cofactor biosynthesis; (R)-pantothenate biosynthesis; (R)-pantothenate from (R)-pantoate and beta-alanine: step 1/1.</text>
</comment>
<comment type="subunit">
    <text evidence="1">Homodimer.</text>
</comment>
<comment type="subcellular location">
    <subcellularLocation>
        <location evidence="1">Cytoplasm</location>
    </subcellularLocation>
</comment>
<comment type="miscellaneous">
    <text evidence="1">The reaction proceeds by a bi uni uni bi ping pong mechanism.</text>
</comment>
<comment type="similarity">
    <text evidence="1">Belongs to the pantothenate synthetase family.</text>
</comment>
<feature type="chain" id="PRO_0000128211" description="Pantothenate synthetase">
    <location>
        <begin position="1"/>
        <end position="293"/>
    </location>
</feature>
<feature type="active site" description="Proton donor" evidence="1">
    <location>
        <position position="37"/>
    </location>
</feature>
<feature type="binding site" evidence="1">
    <location>
        <begin position="30"/>
        <end position="37"/>
    </location>
    <ligand>
        <name>ATP</name>
        <dbReference type="ChEBI" id="CHEBI:30616"/>
    </ligand>
</feature>
<feature type="binding site" evidence="1">
    <location>
        <position position="61"/>
    </location>
    <ligand>
        <name>(R)-pantoate</name>
        <dbReference type="ChEBI" id="CHEBI:15980"/>
    </ligand>
</feature>
<feature type="binding site" evidence="1">
    <location>
        <position position="61"/>
    </location>
    <ligand>
        <name>beta-alanine</name>
        <dbReference type="ChEBI" id="CHEBI:57966"/>
    </ligand>
</feature>
<feature type="binding site" evidence="1">
    <location>
        <begin position="147"/>
        <end position="150"/>
    </location>
    <ligand>
        <name>ATP</name>
        <dbReference type="ChEBI" id="CHEBI:30616"/>
    </ligand>
</feature>
<feature type="binding site" evidence="1">
    <location>
        <position position="153"/>
    </location>
    <ligand>
        <name>(R)-pantoate</name>
        <dbReference type="ChEBI" id="CHEBI:15980"/>
    </ligand>
</feature>
<feature type="binding site" evidence="1">
    <location>
        <position position="176"/>
    </location>
    <ligand>
        <name>ATP</name>
        <dbReference type="ChEBI" id="CHEBI:30616"/>
    </ligand>
</feature>
<feature type="binding site" evidence="1">
    <location>
        <begin position="184"/>
        <end position="187"/>
    </location>
    <ligand>
        <name>ATP</name>
        <dbReference type="ChEBI" id="CHEBI:30616"/>
    </ligand>
</feature>
<dbReference type="EC" id="6.3.2.1" evidence="1"/>
<dbReference type="EMBL" id="AE014291">
    <property type="protein sequence ID" value="AAN29278.1"/>
    <property type="molecule type" value="Genomic_DNA"/>
</dbReference>
<dbReference type="EMBL" id="CP002997">
    <property type="protein sequence ID" value="AEM17691.1"/>
    <property type="molecule type" value="Genomic_DNA"/>
</dbReference>
<dbReference type="RefSeq" id="WP_004690555.1">
    <property type="nucleotide sequence ID" value="NZ_KN046804.1"/>
</dbReference>
<dbReference type="SMR" id="Q8G2J0"/>
<dbReference type="GeneID" id="55590103"/>
<dbReference type="KEGG" id="bms:BR0329"/>
<dbReference type="KEGG" id="bsi:BS1330_I0330"/>
<dbReference type="PATRIC" id="fig|204722.21.peg.2489"/>
<dbReference type="HOGENOM" id="CLU_047148_0_0_5"/>
<dbReference type="PhylomeDB" id="Q8G2J0"/>
<dbReference type="UniPathway" id="UPA00028">
    <property type="reaction ID" value="UER00005"/>
</dbReference>
<dbReference type="Proteomes" id="UP000007104">
    <property type="component" value="Chromosome I"/>
</dbReference>
<dbReference type="GO" id="GO:0005829">
    <property type="term" value="C:cytosol"/>
    <property type="evidence" value="ECO:0007669"/>
    <property type="project" value="TreeGrafter"/>
</dbReference>
<dbReference type="GO" id="GO:0005524">
    <property type="term" value="F:ATP binding"/>
    <property type="evidence" value="ECO:0007669"/>
    <property type="project" value="UniProtKB-KW"/>
</dbReference>
<dbReference type="GO" id="GO:0004592">
    <property type="term" value="F:pantoate-beta-alanine ligase activity"/>
    <property type="evidence" value="ECO:0007669"/>
    <property type="project" value="UniProtKB-UniRule"/>
</dbReference>
<dbReference type="GO" id="GO:0015940">
    <property type="term" value="P:pantothenate biosynthetic process"/>
    <property type="evidence" value="ECO:0007669"/>
    <property type="project" value="UniProtKB-UniRule"/>
</dbReference>
<dbReference type="CDD" id="cd00560">
    <property type="entry name" value="PanC"/>
    <property type="match status" value="1"/>
</dbReference>
<dbReference type="FunFam" id="3.40.50.620:FF:000013">
    <property type="entry name" value="Pantothenate synthetase"/>
    <property type="match status" value="1"/>
</dbReference>
<dbReference type="Gene3D" id="3.40.50.620">
    <property type="entry name" value="HUPs"/>
    <property type="match status" value="1"/>
</dbReference>
<dbReference type="Gene3D" id="3.30.1300.10">
    <property type="entry name" value="Pantoate-beta-alanine ligase, C-terminal domain"/>
    <property type="match status" value="1"/>
</dbReference>
<dbReference type="HAMAP" id="MF_00158">
    <property type="entry name" value="PanC"/>
    <property type="match status" value="1"/>
</dbReference>
<dbReference type="InterPro" id="IPR004821">
    <property type="entry name" value="Cyt_trans-like"/>
</dbReference>
<dbReference type="InterPro" id="IPR003721">
    <property type="entry name" value="Pantoate_ligase"/>
</dbReference>
<dbReference type="InterPro" id="IPR042176">
    <property type="entry name" value="Pantoate_ligase_C"/>
</dbReference>
<dbReference type="InterPro" id="IPR014729">
    <property type="entry name" value="Rossmann-like_a/b/a_fold"/>
</dbReference>
<dbReference type="NCBIfam" id="TIGR00125">
    <property type="entry name" value="cyt_tran_rel"/>
    <property type="match status" value="1"/>
</dbReference>
<dbReference type="NCBIfam" id="TIGR00018">
    <property type="entry name" value="panC"/>
    <property type="match status" value="1"/>
</dbReference>
<dbReference type="PANTHER" id="PTHR21299">
    <property type="entry name" value="CYTIDYLATE KINASE/PANTOATE-BETA-ALANINE LIGASE"/>
    <property type="match status" value="1"/>
</dbReference>
<dbReference type="PANTHER" id="PTHR21299:SF1">
    <property type="entry name" value="PANTOATE--BETA-ALANINE LIGASE"/>
    <property type="match status" value="1"/>
</dbReference>
<dbReference type="Pfam" id="PF02569">
    <property type="entry name" value="Pantoate_ligase"/>
    <property type="match status" value="1"/>
</dbReference>
<dbReference type="SUPFAM" id="SSF52374">
    <property type="entry name" value="Nucleotidylyl transferase"/>
    <property type="match status" value="1"/>
</dbReference>
<gene>
    <name evidence="1" type="primary">panC</name>
    <name type="ordered locus">BR0329</name>
    <name type="ordered locus">BS1330_I0330</name>
</gene>
<proteinExistence type="inferred from homology"/>
<protein>
    <recommendedName>
        <fullName evidence="1">Pantothenate synthetase</fullName>
        <shortName evidence="1">PS</shortName>
        <ecNumber evidence="1">6.3.2.1</ecNumber>
    </recommendedName>
    <alternativeName>
        <fullName evidence="1">Pantoate--beta-alanine ligase</fullName>
    </alternativeName>
    <alternativeName>
        <fullName evidence="1">Pantoate-activating enzyme</fullName>
    </alternativeName>
</protein>
<sequence>MQIIHTIEELRQALAPARQQGKKIGFVPTMGYLHKGHLELVRRARVENDVTLVSIFVNPLQFGANEDLGRYPRDLERDAGLLHDAQVDYLFAPTVSDMYPRPMQTVVDVPPLGNQMEGEARPGHFAGVATVVSKLFNIVGPDAAYFGEKDFQQLVIIRRMVDDMAIPVRIVGVETVREDDGLACSSRNVYLTPEQRRAAIIVPQALDEADRLYRSGMDDPDALEAAIRTFISRQPLAVPEVIAIRDPETLERLPALQGRPILVALFVRVGATRLLDNRVIGHAAPQITQERAA</sequence>
<reference key="1">
    <citation type="journal article" date="2002" name="Proc. Natl. Acad. Sci. U.S.A.">
        <title>The Brucella suis genome reveals fundamental similarities between animal and plant pathogens and symbionts.</title>
        <authorList>
            <person name="Paulsen I.T."/>
            <person name="Seshadri R."/>
            <person name="Nelson K.E."/>
            <person name="Eisen J.A."/>
            <person name="Heidelberg J.F."/>
            <person name="Read T.D."/>
            <person name="Dodson R.J."/>
            <person name="Umayam L.A."/>
            <person name="Brinkac L.M."/>
            <person name="Beanan M.J."/>
            <person name="Daugherty S.C."/>
            <person name="DeBoy R.T."/>
            <person name="Durkin A.S."/>
            <person name="Kolonay J.F."/>
            <person name="Madupu R."/>
            <person name="Nelson W.C."/>
            <person name="Ayodeji B."/>
            <person name="Kraul M."/>
            <person name="Shetty J."/>
            <person name="Malek J.A."/>
            <person name="Van Aken S.E."/>
            <person name="Riedmuller S."/>
            <person name="Tettelin H."/>
            <person name="Gill S.R."/>
            <person name="White O."/>
            <person name="Salzberg S.L."/>
            <person name="Hoover D.L."/>
            <person name="Lindler L.E."/>
            <person name="Halling S.M."/>
            <person name="Boyle S.M."/>
            <person name="Fraser C.M."/>
        </authorList>
    </citation>
    <scope>NUCLEOTIDE SEQUENCE [LARGE SCALE GENOMIC DNA]</scope>
    <source>
        <strain>1330</strain>
    </source>
</reference>
<reference key="2">
    <citation type="journal article" date="2011" name="J. Bacteriol.">
        <title>Revised genome sequence of Brucella suis 1330.</title>
        <authorList>
            <person name="Tae H."/>
            <person name="Shallom S."/>
            <person name="Settlage R."/>
            <person name="Preston D."/>
            <person name="Adams L.G."/>
            <person name="Garner H.R."/>
        </authorList>
    </citation>
    <scope>NUCLEOTIDE SEQUENCE [LARGE SCALE GENOMIC DNA]</scope>
    <source>
        <strain>1330</strain>
    </source>
</reference>
<keyword id="KW-0067">ATP-binding</keyword>
<keyword id="KW-0963">Cytoplasm</keyword>
<keyword id="KW-0436">Ligase</keyword>
<keyword id="KW-0547">Nucleotide-binding</keyword>
<keyword id="KW-0566">Pantothenate biosynthesis</keyword>